<feature type="chain" id="PRO_0000186942" description="Uncharacterized protein aq_1680">
    <location>
        <begin position="1"/>
        <end position="265"/>
    </location>
</feature>
<feature type="coiled-coil region" evidence="1">
    <location>
        <begin position="143"/>
        <end position="205"/>
    </location>
</feature>
<proteinExistence type="predicted"/>
<accession>O67591</accession>
<protein>
    <recommendedName>
        <fullName>Uncharacterized protein aq_1680</fullName>
    </recommendedName>
</protein>
<reference key="1">
    <citation type="journal article" date="1998" name="Nature">
        <title>The complete genome of the hyperthermophilic bacterium Aquifex aeolicus.</title>
        <authorList>
            <person name="Deckert G."/>
            <person name="Warren P.V."/>
            <person name="Gaasterland T."/>
            <person name="Young W.G."/>
            <person name="Lenox A.L."/>
            <person name="Graham D.E."/>
            <person name="Overbeek R."/>
            <person name="Snead M.A."/>
            <person name="Keller M."/>
            <person name="Aujay M."/>
            <person name="Huber R."/>
            <person name="Feldman R.A."/>
            <person name="Short J.M."/>
            <person name="Olsen G.J."/>
            <person name="Swanson R.V."/>
        </authorList>
    </citation>
    <scope>NUCLEOTIDE SEQUENCE [LARGE SCALE GENOMIC DNA]</scope>
    <source>
        <strain>VF5</strain>
    </source>
</reference>
<dbReference type="EMBL" id="AE000657">
    <property type="protein sequence ID" value="AAC07555.1"/>
    <property type="molecule type" value="Genomic_DNA"/>
</dbReference>
<dbReference type="PIR" id="F70445">
    <property type="entry name" value="F70445"/>
</dbReference>
<dbReference type="RefSeq" id="NP_214157.1">
    <property type="nucleotide sequence ID" value="NC_000918.1"/>
</dbReference>
<dbReference type="RefSeq" id="WP_010881094.1">
    <property type="nucleotide sequence ID" value="NC_000918.1"/>
</dbReference>
<dbReference type="SMR" id="O67591"/>
<dbReference type="STRING" id="224324.aq_1680"/>
<dbReference type="EnsemblBacteria" id="AAC07555">
    <property type="protein sequence ID" value="AAC07555"/>
    <property type="gene ID" value="aq_1680"/>
</dbReference>
<dbReference type="KEGG" id="aae:aq_1680"/>
<dbReference type="PATRIC" id="fig|224324.8.peg.1298"/>
<dbReference type="eggNOG" id="COG3334">
    <property type="taxonomic scope" value="Bacteria"/>
</dbReference>
<dbReference type="HOGENOM" id="CLU_1048243_0_0_0"/>
<dbReference type="InParanoid" id="O67591"/>
<dbReference type="OrthoDB" id="15329at2"/>
<dbReference type="Proteomes" id="UP000000798">
    <property type="component" value="Chromosome"/>
</dbReference>
<dbReference type="Gene3D" id="1.10.220.30">
    <property type="match status" value="1"/>
</dbReference>
<dbReference type="SUPFAM" id="SSF158791">
    <property type="entry name" value="MgtE N-terminal domain-like"/>
    <property type="match status" value="1"/>
</dbReference>
<evidence type="ECO:0000255" key="1"/>
<sequence>MFKRIREIKEKEQEELVRKISELLALERELERKLEELLREYDRKSQSVNTLNEIFKLKAITRKIEETVDYLEELNVKKEELKEKYLELKGEIKSIEILEERKKREKIKKEIAVSLQELGFMHLVKKIIPVFFMFFSFLFSESATQKALKDSINLKEDYKVLLKLIEEKLKKLEEERKKLEALQKTPLTEEEKKKLEKLIKSVEKAPADEIAPAIENLPPKLAAEILLRIKERKAGQILANMNPQKASEIMKYILERNPSFNAQVD</sequence>
<gene>
    <name type="ordered locus">aq_1680</name>
</gene>
<organism>
    <name type="scientific">Aquifex aeolicus (strain VF5)</name>
    <dbReference type="NCBI Taxonomy" id="224324"/>
    <lineage>
        <taxon>Bacteria</taxon>
        <taxon>Pseudomonadati</taxon>
        <taxon>Aquificota</taxon>
        <taxon>Aquificia</taxon>
        <taxon>Aquificales</taxon>
        <taxon>Aquificaceae</taxon>
        <taxon>Aquifex</taxon>
    </lineage>
</organism>
<name>Y1680_AQUAE</name>
<keyword id="KW-0175">Coiled coil</keyword>
<keyword id="KW-1185">Reference proteome</keyword>